<proteinExistence type="inferred from homology"/>
<organism>
    <name type="scientific">Chlorobium phaeovibrioides (strain DSM 265 / 1930)</name>
    <name type="common">Prosthecochloris vibrioformis (strain DSM 265)</name>
    <dbReference type="NCBI Taxonomy" id="290318"/>
    <lineage>
        <taxon>Bacteria</taxon>
        <taxon>Pseudomonadati</taxon>
        <taxon>Chlorobiota</taxon>
        <taxon>Chlorobiia</taxon>
        <taxon>Chlorobiales</taxon>
        <taxon>Chlorobiaceae</taxon>
        <taxon>Chlorobium/Pelodictyon group</taxon>
        <taxon>Chlorobium</taxon>
    </lineage>
</organism>
<feature type="chain" id="PRO_1000075939" description="2-C-methyl-D-erythritol 4-phosphate cytidylyltransferase">
    <location>
        <begin position="1"/>
        <end position="243"/>
    </location>
</feature>
<feature type="site" description="Transition state stabilizer" evidence="1">
    <location>
        <position position="15"/>
    </location>
</feature>
<feature type="site" description="Transition state stabilizer" evidence="1">
    <location>
        <position position="24"/>
    </location>
</feature>
<feature type="site" description="Positions MEP for the nucleophilic attack" evidence="1">
    <location>
        <position position="164"/>
    </location>
</feature>
<feature type="site" description="Positions MEP for the nucleophilic attack" evidence="1">
    <location>
        <position position="222"/>
    </location>
</feature>
<dbReference type="EC" id="2.7.7.60" evidence="1"/>
<dbReference type="EMBL" id="CP000607">
    <property type="protein sequence ID" value="ABP37063.1"/>
    <property type="molecule type" value="Genomic_DNA"/>
</dbReference>
<dbReference type="SMR" id="A4SF04"/>
<dbReference type="STRING" id="290318.Cvib_1049"/>
<dbReference type="KEGG" id="pvi:Cvib_1049"/>
<dbReference type="eggNOG" id="COG1211">
    <property type="taxonomic scope" value="Bacteria"/>
</dbReference>
<dbReference type="HOGENOM" id="CLU_061281_2_2_10"/>
<dbReference type="OrthoDB" id="9806837at2"/>
<dbReference type="UniPathway" id="UPA00056">
    <property type="reaction ID" value="UER00093"/>
</dbReference>
<dbReference type="GO" id="GO:0050518">
    <property type="term" value="F:2-C-methyl-D-erythritol 4-phosphate cytidylyltransferase activity"/>
    <property type="evidence" value="ECO:0007669"/>
    <property type="project" value="UniProtKB-UniRule"/>
</dbReference>
<dbReference type="GO" id="GO:0019288">
    <property type="term" value="P:isopentenyl diphosphate biosynthetic process, methylerythritol 4-phosphate pathway"/>
    <property type="evidence" value="ECO:0007669"/>
    <property type="project" value="UniProtKB-UniRule"/>
</dbReference>
<dbReference type="CDD" id="cd02516">
    <property type="entry name" value="CDP-ME_synthetase"/>
    <property type="match status" value="1"/>
</dbReference>
<dbReference type="FunFam" id="3.90.550.10:FF:000003">
    <property type="entry name" value="2-C-methyl-D-erythritol 4-phosphate cytidylyltransferase"/>
    <property type="match status" value="1"/>
</dbReference>
<dbReference type="Gene3D" id="3.90.550.10">
    <property type="entry name" value="Spore Coat Polysaccharide Biosynthesis Protein SpsA, Chain A"/>
    <property type="match status" value="1"/>
</dbReference>
<dbReference type="HAMAP" id="MF_00108">
    <property type="entry name" value="IspD"/>
    <property type="match status" value="1"/>
</dbReference>
<dbReference type="InterPro" id="IPR001228">
    <property type="entry name" value="IspD"/>
</dbReference>
<dbReference type="InterPro" id="IPR034683">
    <property type="entry name" value="IspD/TarI"/>
</dbReference>
<dbReference type="InterPro" id="IPR050088">
    <property type="entry name" value="IspD/TarI_cytidylyltransf_bact"/>
</dbReference>
<dbReference type="InterPro" id="IPR018294">
    <property type="entry name" value="ISPD_synthase_CS"/>
</dbReference>
<dbReference type="InterPro" id="IPR029044">
    <property type="entry name" value="Nucleotide-diphossugar_trans"/>
</dbReference>
<dbReference type="NCBIfam" id="TIGR00453">
    <property type="entry name" value="ispD"/>
    <property type="match status" value="1"/>
</dbReference>
<dbReference type="PANTHER" id="PTHR32125">
    <property type="entry name" value="2-C-METHYL-D-ERYTHRITOL 4-PHOSPHATE CYTIDYLYLTRANSFERASE, CHLOROPLASTIC"/>
    <property type="match status" value="1"/>
</dbReference>
<dbReference type="PANTHER" id="PTHR32125:SF4">
    <property type="entry name" value="2-C-METHYL-D-ERYTHRITOL 4-PHOSPHATE CYTIDYLYLTRANSFERASE, CHLOROPLASTIC"/>
    <property type="match status" value="1"/>
</dbReference>
<dbReference type="Pfam" id="PF01128">
    <property type="entry name" value="IspD"/>
    <property type="match status" value="1"/>
</dbReference>
<dbReference type="SUPFAM" id="SSF53448">
    <property type="entry name" value="Nucleotide-diphospho-sugar transferases"/>
    <property type="match status" value="1"/>
</dbReference>
<dbReference type="PROSITE" id="PS01295">
    <property type="entry name" value="ISPD"/>
    <property type="match status" value="1"/>
</dbReference>
<gene>
    <name evidence="1" type="primary">ispD</name>
    <name type="ordered locus">Cvib_1049</name>
</gene>
<sequence length="243" mass="26282">MNATAIIAASGVGKRMNLGGGRSKQMLEIGGFPVIHHTIKAFQEAASIKAICIATKAEHVETLRTMAREAGFTKVTTVIEGGEERQDSVGNCIRSIRDEAAAGKEMPEAILVHDGARPFIQPDEIDAIAALSLEYGASVPANRPKDTIKCIGTTPGFFGETLDRATLLQVQTPQGFKADILIKAHEQAAKEGRYATDDAALVERYFPANPIRIYETGYHNIKITTPEDLPMAEAIYSSLSKKR</sequence>
<comment type="function">
    <text evidence="1">Catalyzes the formation of 4-diphosphocytidyl-2-C-methyl-D-erythritol from CTP and 2-C-methyl-D-erythritol 4-phosphate (MEP).</text>
</comment>
<comment type="catalytic activity">
    <reaction evidence="1">
        <text>2-C-methyl-D-erythritol 4-phosphate + CTP + H(+) = 4-CDP-2-C-methyl-D-erythritol + diphosphate</text>
        <dbReference type="Rhea" id="RHEA:13429"/>
        <dbReference type="ChEBI" id="CHEBI:15378"/>
        <dbReference type="ChEBI" id="CHEBI:33019"/>
        <dbReference type="ChEBI" id="CHEBI:37563"/>
        <dbReference type="ChEBI" id="CHEBI:57823"/>
        <dbReference type="ChEBI" id="CHEBI:58262"/>
        <dbReference type="EC" id="2.7.7.60"/>
    </reaction>
</comment>
<comment type="pathway">
    <text evidence="1">Isoprenoid biosynthesis; isopentenyl diphosphate biosynthesis via DXP pathway; isopentenyl diphosphate from 1-deoxy-D-xylulose 5-phosphate: step 2/6.</text>
</comment>
<comment type="similarity">
    <text evidence="1">Belongs to the IspD/TarI cytidylyltransferase family. IspD subfamily.</text>
</comment>
<keyword id="KW-0414">Isoprene biosynthesis</keyword>
<keyword id="KW-0548">Nucleotidyltransferase</keyword>
<keyword id="KW-0808">Transferase</keyword>
<name>ISPD_CHLPM</name>
<accession>A4SF04</accession>
<evidence type="ECO:0000255" key="1">
    <source>
        <dbReference type="HAMAP-Rule" id="MF_00108"/>
    </source>
</evidence>
<reference key="1">
    <citation type="submission" date="2007-03" db="EMBL/GenBank/DDBJ databases">
        <title>Complete sequence of Prosthecochloris vibrioformis DSM 265.</title>
        <authorList>
            <consortium name="US DOE Joint Genome Institute"/>
            <person name="Copeland A."/>
            <person name="Lucas S."/>
            <person name="Lapidus A."/>
            <person name="Barry K."/>
            <person name="Detter J.C."/>
            <person name="Glavina del Rio T."/>
            <person name="Hammon N."/>
            <person name="Israni S."/>
            <person name="Pitluck S."/>
            <person name="Schmutz J."/>
            <person name="Larimer F."/>
            <person name="Land M."/>
            <person name="Hauser L."/>
            <person name="Mikhailova N."/>
            <person name="Li T."/>
            <person name="Overmann J."/>
            <person name="Schuster S.C."/>
            <person name="Bryant D.A."/>
            <person name="Richardson P."/>
        </authorList>
    </citation>
    <scope>NUCLEOTIDE SEQUENCE [LARGE SCALE GENOMIC DNA]</scope>
    <source>
        <strain>DSM 265 / 1930</strain>
    </source>
</reference>
<protein>
    <recommendedName>
        <fullName evidence="1">2-C-methyl-D-erythritol 4-phosphate cytidylyltransferase</fullName>
        <ecNumber evidence="1">2.7.7.60</ecNumber>
    </recommendedName>
    <alternativeName>
        <fullName evidence="1">4-diphosphocytidyl-2C-methyl-D-erythritol synthase</fullName>
    </alternativeName>
    <alternativeName>
        <fullName evidence="1">MEP cytidylyltransferase</fullName>
        <shortName evidence="1">MCT</shortName>
    </alternativeName>
</protein>